<name>RPSB_MYXXA</name>
<sequence>MVTANLRFVVKVAYEYRSYGIKMSDLIQEGNIGLMKAVQKFDPDKGIRLISYAVWWIRAYIQNYILKSWSLVKLGTTQAHGKLFFSLARTRRELEKFGSGDAAVNVDDIARRLHVKPGEVREMEQRMGGRDLSLDAPMGEDGGNSHVDFVVSAAAPQDDEFADKEEAGLINARVRAALMRLDPREPFIIEQRVMNERPMTLKELGEHFGFSRERARQLEIRAKDKLKSELAALMAEVDPEAVAAQQ</sequence>
<dbReference type="EMBL" id="X55500">
    <property type="protein sequence ID" value="CAA39117.1"/>
    <property type="status" value="ALT_SEQ"/>
    <property type="molecule type" value="Genomic_DNA"/>
</dbReference>
<dbReference type="PIR" id="A36672">
    <property type="entry name" value="A36672"/>
</dbReference>
<dbReference type="PIR" id="T10127">
    <property type="entry name" value="T10127"/>
</dbReference>
<dbReference type="SMR" id="P19433"/>
<dbReference type="GO" id="GO:0003677">
    <property type="term" value="F:DNA binding"/>
    <property type="evidence" value="ECO:0007669"/>
    <property type="project" value="UniProtKB-KW"/>
</dbReference>
<dbReference type="GO" id="GO:0016987">
    <property type="term" value="F:sigma factor activity"/>
    <property type="evidence" value="ECO:0007669"/>
    <property type="project" value="UniProtKB-KW"/>
</dbReference>
<dbReference type="GO" id="GO:0006352">
    <property type="term" value="P:DNA-templated transcription initiation"/>
    <property type="evidence" value="ECO:0007669"/>
    <property type="project" value="InterPro"/>
</dbReference>
<dbReference type="CDD" id="cd06171">
    <property type="entry name" value="Sigma70_r4"/>
    <property type="match status" value="1"/>
</dbReference>
<dbReference type="Gene3D" id="1.20.140.160">
    <property type="match status" value="1"/>
</dbReference>
<dbReference type="Gene3D" id="1.10.601.10">
    <property type="entry name" value="RNA Polymerase Primary Sigma Factor"/>
    <property type="match status" value="1"/>
</dbReference>
<dbReference type="InterPro" id="IPR014284">
    <property type="entry name" value="RNA_pol_sigma-70_dom"/>
</dbReference>
<dbReference type="InterPro" id="IPR000943">
    <property type="entry name" value="RNA_pol_sigma70"/>
</dbReference>
<dbReference type="InterPro" id="IPR007627">
    <property type="entry name" value="RNA_pol_sigma70_r2"/>
</dbReference>
<dbReference type="InterPro" id="IPR007630">
    <property type="entry name" value="RNA_pol_sigma70_r4"/>
</dbReference>
<dbReference type="InterPro" id="IPR013325">
    <property type="entry name" value="RNA_pol_sigma_r2"/>
</dbReference>
<dbReference type="InterPro" id="IPR013324">
    <property type="entry name" value="RNA_pol_sigma_r3/r4-like"/>
</dbReference>
<dbReference type="InterPro" id="IPR050813">
    <property type="entry name" value="Sigma-70_Factor"/>
</dbReference>
<dbReference type="NCBIfam" id="NF005143">
    <property type="entry name" value="PRK06596.1"/>
    <property type="match status" value="1"/>
</dbReference>
<dbReference type="NCBIfam" id="TIGR02937">
    <property type="entry name" value="sigma70-ECF"/>
    <property type="match status" value="1"/>
</dbReference>
<dbReference type="PANTHER" id="PTHR30376:SF3">
    <property type="entry name" value="RNA POLYMERASE SIGMA FACTOR RPOH"/>
    <property type="match status" value="1"/>
</dbReference>
<dbReference type="PANTHER" id="PTHR30376">
    <property type="entry name" value="SIGMA FACTOR RPOH HEAT SHOCK RELATED"/>
    <property type="match status" value="1"/>
</dbReference>
<dbReference type="Pfam" id="PF04542">
    <property type="entry name" value="Sigma70_r2"/>
    <property type="match status" value="1"/>
</dbReference>
<dbReference type="Pfam" id="PF04545">
    <property type="entry name" value="Sigma70_r4"/>
    <property type="match status" value="1"/>
</dbReference>
<dbReference type="PRINTS" id="PR00046">
    <property type="entry name" value="SIGMA70FCT"/>
</dbReference>
<dbReference type="SUPFAM" id="SSF88946">
    <property type="entry name" value="Sigma2 domain of RNA polymerase sigma factors"/>
    <property type="match status" value="1"/>
</dbReference>
<dbReference type="SUPFAM" id="SSF88659">
    <property type="entry name" value="Sigma3 and sigma4 domains of RNA polymerase sigma factors"/>
    <property type="match status" value="1"/>
</dbReference>
<dbReference type="PROSITE" id="PS00715">
    <property type="entry name" value="SIGMA70_1"/>
    <property type="match status" value="1"/>
</dbReference>
<dbReference type="PROSITE" id="PS00716">
    <property type="entry name" value="SIGMA70_2"/>
    <property type="match status" value="1"/>
</dbReference>
<reference key="1">
    <citation type="journal article" date="1990" name="Genes Dev.">
        <title>Development-specific sigma-factor essential for late-stage differentiation of Myxococcus xanthus.</title>
        <authorList>
            <person name="Apelian D."/>
            <person name="Inouye S."/>
        </authorList>
    </citation>
    <scope>NUCLEOTIDE SEQUENCE [GENOMIC DNA]</scope>
    <source>
        <strain>FB / DZF1</strain>
    </source>
</reference>
<reference key="2">
    <citation type="journal article" date="1992" name="J. Bacteriol.">
        <title>The sigma 70 family: sequence conservation and evolutionary relationships.</title>
        <authorList>
            <person name="Lonetto M."/>
            <person name="Gribskov M."/>
            <person name="Gross C.A."/>
        </authorList>
    </citation>
    <scope>SEQUENCE REVISION TO C-TERMINUS</scope>
</reference>
<proteinExistence type="inferred from homology"/>
<comment type="function">
    <text>Sigma factors are initiation factors that promote the attachment of RNA polymerase to specific initiation sites and are then released. This sigma factor is essential for late-stage differentiation of M.xanthus.</text>
</comment>
<comment type="similarity">
    <text evidence="2">Belongs to the sigma-70 factor family.</text>
</comment>
<accession>P19433</accession>
<keyword id="KW-0238">DNA-binding</keyword>
<keyword id="KW-0731">Sigma factor</keyword>
<keyword id="KW-0804">Transcription</keyword>
<keyword id="KW-0805">Transcription regulation</keyword>
<organism>
    <name type="scientific">Myxococcus xanthus</name>
    <dbReference type="NCBI Taxonomy" id="34"/>
    <lineage>
        <taxon>Bacteria</taxon>
        <taxon>Pseudomonadati</taxon>
        <taxon>Myxococcota</taxon>
        <taxon>Myxococcia</taxon>
        <taxon>Myxococcales</taxon>
        <taxon>Cystobacterineae</taxon>
        <taxon>Myxococcaceae</taxon>
        <taxon>Myxococcus</taxon>
    </lineage>
</organism>
<gene>
    <name type="primary">sigB</name>
</gene>
<feature type="chain" id="PRO_0000093967" description="RNA polymerase sigma-B factor">
    <location>
        <begin position="1"/>
        <end position="246"/>
    </location>
</feature>
<feature type="DNA-binding region" description="H-T-H motif" evidence="1">
    <location>
        <begin position="201"/>
        <end position="220"/>
    </location>
</feature>
<feature type="short sequence motif" description="Polymerase core binding">
    <location>
        <begin position="25"/>
        <end position="38"/>
    </location>
</feature>
<protein>
    <recommendedName>
        <fullName>RNA polymerase sigma-B factor</fullName>
    </recommendedName>
</protein>
<evidence type="ECO:0000250" key="1"/>
<evidence type="ECO:0000305" key="2"/>